<name>CB23_ORYSI</name>
<feature type="transit peptide" description="Chloroplast" evidence="5">
    <location>
        <begin position="1"/>
        <end position="35"/>
    </location>
</feature>
<feature type="chain" id="PRO_0000293080" description="Chlorophyll a-b binding protein, chloroplastic">
    <location>
        <begin position="36"/>
        <end position="263"/>
    </location>
</feature>
<feature type="transmembrane region" description="Helical" evidence="4">
    <location>
        <begin position="97"/>
        <end position="117"/>
    </location>
</feature>
<feature type="transmembrane region" description="Helical" evidence="4">
    <location>
        <begin position="149"/>
        <end position="169"/>
    </location>
</feature>
<feature type="transmembrane region" description="Helical" evidence="4">
    <location>
        <begin position="217"/>
        <end position="237"/>
    </location>
</feature>
<feature type="binding site" description="axial binding residue" evidence="3">
    <location>
        <position position="55"/>
    </location>
    <ligand>
        <name>chlorophyll b</name>
        <dbReference type="ChEBI" id="CHEBI:61721"/>
        <label>1</label>
    </ligand>
    <ligandPart>
        <name>Mg</name>
        <dbReference type="ChEBI" id="CHEBI:25107"/>
    </ligandPart>
</feature>
<feature type="binding site" evidence="1">
    <location>
        <position position="77"/>
    </location>
    <ligand>
        <name>chlorophyll a</name>
        <dbReference type="ChEBI" id="CHEBI:58416"/>
        <label>1</label>
    </ligand>
</feature>
<feature type="binding site" evidence="1">
    <location>
        <position position="83"/>
    </location>
    <ligand>
        <name>chlorophyll a</name>
        <dbReference type="ChEBI" id="CHEBI:58416"/>
        <label>1</label>
    </ligand>
</feature>
<feature type="binding site" description="axial binding residue" evidence="3">
    <location>
        <position position="96"/>
    </location>
    <ligand>
        <name>chlorophyll a</name>
        <dbReference type="ChEBI" id="CHEBI:58416"/>
        <label>1</label>
    </ligand>
    <ligandPart>
        <name>Mg</name>
        <dbReference type="ChEBI" id="CHEBI:25107"/>
    </ligandPart>
</feature>
<feature type="binding site" description="axial binding residue" evidence="3">
    <location>
        <position position="99"/>
    </location>
    <ligand>
        <name>chlorophyll a</name>
        <dbReference type="ChEBI" id="CHEBI:58416"/>
        <label>2</label>
    </ligand>
    <ligandPart>
        <name>Mg</name>
        <dbReference type="ChEBI" id="CHEBI:25107"/>
    </ligandPart>
</feature>
<feature type="binding site" evidence="1">
    <location>
        <position position="101"/>
    </location>
    <ligand>
        <name>chlorophyll b</name>
        <dbReference type="ChEBI" id="CHEBI:61721"/>
        <label>2</label>
    </ligand>
</feature>
<feature type="binding site" evidence="1">
    <location>
        <position position="134"/>
    </location>
    <ligand>
        <name>chlorophyll a</name>
        <dbReference type="ChEBI" id="CHEBI:58416"/>
        <label>3</label>
    </ligand>
</feature>
<feature type="binding site" evidence="1">
    <location>
        <position position="144"/>
    </location>
    <ligand>
        <name>chlorophyll a</name>
        <dbReference type="ChEBI" id="CHEBI:58416"/>
        <label>3</label>
    </ligand>
</feature>
<feature type="binding site" description="axial binding residue" evidence="3">
    <location>
        <position position="150"/>
    </location>
    <ligand>
        <name>chlorophyll b</name>
        <dbReference type="ChEBI" id="CHEBI:61721"/>
        <label>2</label>
    </ligand>
    <ligandPart>
        <name>Mg</name>
        <dbReference type="ChEBI" id="CHEBI:25107"/>
    </ligandPart>
</feature>
<feature type="binding site" evidence="1">
    <location>
        <position position="154"/>
    </location>
    <ligand>
        <name>chlorophyll b</name>
        <dbReference type="ChEBI" id="CHEBI:61721"/>
        <label>3</label>
    </ligand>
</feature>
<feature type="binding site" evidence="1">
    <location>
        <position position="162"/>
    </location>
    <ligand>
        <name>chlorophyll b</name>
        <dbReference type="ChEBI" id="CHEBI:61721"/>
        <label>4</label>
    </ligand>
</feature>
<feature type="binding site" evidence="2">
    <location>
        <position position="162"/>
    </location>
    <ligand>
        <name>chlorophyll b</name>
        <dbReference type="ChEBI" id="CHEBI:61721"/>
        <label>5</label>
    </ligand>
</feature>
<feature type="binding site" description="axial binding residue" evidence="3">
    <location>
        <position position="170"/>
    </location>
    <ligand>
        <name>chlorophyll b</name>
        <dbReference type="ChEBI" id="CHEBI:61721"/>
        <label>3</label>
    </ligand>
    <ligandPart>
        <name>Mg</name>
        <dbReference type="ChEBI" id="CHEBI:25107"/>
    </ligandPart>
</feature>
<feature type="binding site" evidence="1">
    <location>
        <position position="173"/>
    </location>
    <ligand>
        <name>chlorophyll b</name>
        <dbReference type="ChEBI" id="CHEBI:61721"/>
        <label>4</label>
    </ligand>
</feature>
<feature type="binding site" evidence="1">
    <location>
        <position position="179"/>
    </location>
    <ligand>
        <name>chlorophyll b</name>
        <dbReference type="ChEBI" id="CHEBI:61721"/>
        <label>2</label>
    </ligand>
</feature>
<feature type="binding site" evidence="1">
    <location>
        <position position="210"/>
    </location>
    <ligand>
        <name>chlorophyll a</name>
        <dbReference type="ChEBI" id="CHEBI:58416"/>
        <label>5</label>
    </ligand>
</feature>
<feature type="binding site" description="axial binding residue" evidence="3">
    <location>
        <position position="211"/>
    </location>
    <ligand>
        <name>chlorophyll a</name>
        <dbReference type="ChEBI" id="CHEBI:58416"/>
        <label>3</label>
    </ligand>
    <ligandPart>
        <name>Mg</name>
        <dbReference type="ChEBI" id="CHEBI:25107"/>
    </ligandPart>
</feature>
<feature type="binding site" description="axial binding residue" evidence="3">
    <location>
        <position position="214"/>
    </location>
    <ligand>
        <name>chlorophyll a</name>
        <dbReference type="ChEBI" id="CHEBI:58416"/>
        <label>4</label>
    </ligand>
    <ligandPart>
        <name>Mg</name>
        <dbReference type="ChEBI" id="CHEBI:25107"/>
    </ligandPart>
</feature>
<feature type="binding site" evidence="1">
    <location>
        <position position="216"/>
    </location>
    <ligand>
        <name>chlorophyll a</name>
        <dbReference type="ChEBI" id="CHEBI:58416"/>
        <label>1</label>
    </ligand>
</feature>
<feature type="binding site" description="axial binding residue" evidence="3">
    <location>
        <position position="228"/>
    </location>
    <ligand>
        <name>chlorophyll a</name>
        <dbReference type="ChEBI" id="CHEBI:58416"/>
        <label>5</label>
    </ligand>
    <ligandPart>
        <name>Mg</name>
        <dbReference type="ChEBI" id="CHEBI:25107"/>
    </ligandPart>
</feature>
<feature type="binding site" description="axial binding residue" evidence="3">
    <location>
        <position position="243"/>
    </location>
    <ligand>
        <name>chlorophyll a</name>
        <dbReference type="ChEBI" id="CHEBI:58416"/>
        <label>6</label>
    </ligand>
    <ligandPart>
        <name>Mg</name>
        <dbReference type="ChEBI" id="CHEBI:25107"/>
    </ligandPart>
</feature>
<feature type="binding site" evidence="1">
    <location>
        <position position="252"/>
    </location>
    <ligand>
        <name>chlorophyll a</name>
        <dbReference type="ChEBI" id="CHEBI:58416"/>
        <label>6</label>
    </ligand>
</feature>
<feature type="binding site" evidence="1">
    <location>
        <position position="259"/>
    </location>
    <ligand>
        <name>chlorophyll b</name>
        <dbReference type="ChEBI" id="CHEBI:61721"/>
        <label>5</label>
    </ligand>
</feature>
<feature type="modified residue" description="N2-acetylarginine" evidence="1">
    <location>
        <position position="36"/>
    </location>
</feature>
<feature type="modified residue" description="Phosphothreonine" evidence="1">
    <location>
        <position position="38"/>
    </location>
</feature>
<feature type="sequence conflict" description="In Ref. 1; AAB82142." evidence="5" ref="1">
    <original>D</original>
    <variation>N</variation>
    <location>
        <position position="28"/>
    </location>
</feature>
<feature type="sequence conflict" description="In Ref. 1; AAB82142." evidence="5" ref="1">
    <original>S</original>
    <variation>N</variation>
    <location>
        <position position="45"/>
    </location>
</feature>
<feature type="sequence conflict" description="In Ref. 1; AAB82142." evidence="5" ref="1">
    <original>E</original>
    <variation>K</variation>
    <location>
        <position position="70"/>
    </location>
</feature>
<feature type="sequence conflict" description="In Ref. 1; AAB82142." evidence="5" ref="1">
    <original>V</original>
    <variation>F</variation>
    <location>
        <position position="111"/>
    </location>
</feature>
<feature type="sequence conflict" description="In Ref. 1; AAB82142." evidence="5" ref="1">
    <original>K</original>
    <variation>N</variation>
    <location>
        <position position="122"/>
    </location>
</feature>
<feature type="sequence conflict" description="In Ref. 1; AAB82142." evidence="5" ref="1">
    <original>N</original>
    <variation>A</variation>
    <location>
        <position position="148"/>
    </location>
</feature>
<feature type="sequence conflict" description="In Ref. 1; AAB82142." evidence="5" ref="1">
    <original>HA</original>
    <variation>RP</variation>
    <location>
        <begin position="151"/>
        <end position="152"/>
    </location>
</feature>
<feature type="sequence conflict" description="In Ref. 1; AAB82142." evidence="5" ref="1">
    <original>P</original>
    <variation>H</variation>
    <location>
        <position position="194"/>
    </location>
</feature>
<feature type="sequence conflict" description="In Ref. 1; AAB82142." evidence="5" ref="1">
    <original>D</original>
    <variation>E</variation>
    <location>
        <position position="199"/>
    </location>
</feature>
<feature type="sequence conflict" description="In Ref. 1; AAB82142." evidence="5" ref="1">
    <original>L</original>
    <variation>F</variation>
    <location>
        <position position="207"/>
    </location>
</feature>
<feature type="sequence conflict" description="In Ref. 1; AAB82142." evidence="5" ref="1">
    <original>LK</original>
    <variation>FN</variation>
    <location>
        <begin position="212"/>
        <end position="213"/>
    </location>
</feature>
<feature type="sequence conflict" description="In Ref. 1; AAB82142." evidence="5" ref="1">
    <original>F</original>
    <variation>L</variation>
    <location>
        <position position="223"/>
    </location>
</feature>
<feature type="sequence conflict" description="In Ref. 1; AAB82142." evidence="5" ref="1">
    <original>L</original>
    <variation>F</variation>
    <location>
        <position position="240"/>
    </location>
</feature>
<organism>
    <name type="scientific">Oryza sativa subsp. indica</name>
    <name type="common">Rice</name>
    <dbReference type="NCBI Taxonomy" id="39946"/>
    <lineage>
        <taxon>Eukaryota</taxon>
        <taxon>Viridiplantae</taxon>
        <taxon>Streptophyta</taxon>
        <taxon>Embryophyta</taxon>
        <taxon>Tracheophyta</taxon>
        <taxon>Spermatophyta</taxon>
        <taxon>Magnoliopsida</taxon>
        <taxon>Liliopsida</taxon>
        <taxon>Poales</taxon>
        <taxon>Poaceae</taxon>
        <taxon>BOP clade</taxon>
        <taxon>Oryzoideae</taxon>
        <taxon>Oryzeae</taxon>
        <taxon>Oryzinae</taxon>
        <taxon>Oryza</taxon>
        <taxon>Oryza sativa</taxon>
    </lineage>
</organism>
<dbReference type="EMBL" id="AF022739">
    <property type="protein sequence ID" value="AAB82142.1"/>
    <property type="molecule type" value="mRNA"/>
</dbReference>
<dbReference type="EMBL" id="CM000128">
    <property type="protein sequence ID" value="EAY90845.1"/>
    <property type="molecule type" value="Genomic_DNA"/>
</dbReference>
<dbReference type="SMR" id="A2XJ35"/>
<dbReference type="STRING" id="39946.A2XJ35"/>
<dbReference type="EnsemblPlants" id="BGIOSGA013052-TA">
    <property type="protein sequence ID" value="BGIOSGA013052-PA"/>
    <property type="gene ID" value="BGIOSGA013052"/>
</dbReference>
<dbReference type="EnsemblPlants" id="OsGoSa_03g0024920.01">
    <property type="protein sequence ID" value="OsGoSa_03g0024920.01"/>
    <property type="gene ID" value="OsGoSa_03g0024920"/>
</dbReference>
<dbReference type="EnsemblPlants" id="OsIR64_03g0024530.01">
    <property type="protein sequence ID" value="OsIR64_03g0024530.01"/>
    <property type="gene ID" value="OsIR64_03g0024530"/>
</dbReference>
<dbReference type="EnsemblPlants" id="OsKYG_03g0024850.01">
    <property type="protein sequence ID" value="OsKYG_03g0024850.01"/>
    <property type="gene ID" value="OsKYG_03g0024850"/>
</dbReference>
<dbReference type="EnsemblPlants" id="OsKYG_03g0024850.02">
    <property type="protein sequence ID" value="OsKYG_03g0024850.02"/>
    <property type="gene ID" value="OsKYG_03g0024850"/>
</dbReference>
<dbReference type="EnsemblPlants" id="OsLima_03g0024810.01">
    <property type="protein sequence ID" value="OsLima_03g0024810.01"/>
    <property type="gene ID" value="OsLima_03g0024810"/>
</dbReference>
<dbReference type="EnsemblPlants" id="OsLiXu_03g0024690.01">
    <property type="protein sequence ID" value="OsLiXu_03g0024690.01"/>
    <property type="gene ID" value="OsLiXu_03g0024690"/>
</dbReference>
<dbReference type="EnsemblPlants" id="OsMH63_03G024820_01">
    <property type="protein sequence ID" value="OsMH63_03G024820_01"/>
    <property type="gene ID" value="OsMH63_03G024820"/>
</dbReference>
<dbReference type="EnsemblPlants" id="OsZS97_03G024810_01">
    <property type="protein sequence ID" value="OsZS97_03G024810_01"/>
    <property type="gene ID" value="OsZS97_03G024810"/>
</dbReference>
<dbReference type="Gramene" id="BGIOSGA013052-TA">
    <property type="protein sequence ID" value="BGIOSGA013052-PA"/>
    <property type="gene ID" value="BGIOSGA013052"/>
</dbReference>
<dbReference type="Gramene" id="OsGoSa_03g0024920.01">
    <property type="protein sequence ID" value="OsGoSa_03g0024920.01"/>
    <property type="gene ID" value="OsGoSa_03g0024920"/>
</dbReference>
<dbReference type="Gramene" id="OsIR64_03g0024530.01">
    <property type="protein sequence ID" value="OsIR64_03g0024530.01"/>
    <property type="gene ID" value="OsIR64_03g0024530"/>
</dbReference>
<dbReference type="Gramene" id="OsKYG_03g0024850.01">
    <property type="protein sequence ID" value="OsKYG_03g0024850.01"/>
    <property type="gene ID" value="OsKYG_03g0024850"/>
</dbReference>
<dbReference type="Gramene" id="OsKYG_03g0024850.02">
    <property type="protein sequence ID" value="OsKYG_03g0024850.02"/>
    <property type="gene ID" value="OsKYG_03g0024850"/>
</dbReference>
<dbReference type="Gramene" id="OsLima_03g0024810.01">
    <property type="protein sequence ID" value="OsLima_03g0024810.01"/>
    <property type="gene ID" value="OsLima_03g0024810"/>
</dbReference>
<dbReference type="Gramene" id="OsLiXu_03g0024690.01">
    <property type="protein sequence ID" value="OsLiXu_03g0024690.01"/>
    <property type="gene ID" value="OsLiXu_03g0024690"/>
</dbReference>
<dbReference type="Gramene" id="OsMH63_03G024820_01">
    <property type="protein sequence ID" value="OsMH63_03G024820_01"/>
    <property type="gene ID" value="OsMH63_03G024820"/>
</dbReference>
<dbReference type="Gramene" id="OsZS97_03G024810_01">
    <property type="protein sequence ID" value="OsZS97_03G024810_01"/>
    <property type="gene ID" value="OsZS97_03G024810"/>
</dbReference>
<dbReference type="HOGENOM" id="CLU_057943_2_0_1"/>
<dbReference type="OMA" id="CEMATAK"/>
<dbReference type="OrthoDB" id="423598at2759"/>
<dbReference type="Proteomes" id="UP000007015">
    <property type="component" value="Chromosome 3"/>
</dbReference>
<dbReference type="GO" id="GO:0009535">
    <property type="term" value="C:chloroplast thylakoid membrane"/>
    <property type="evidence" value="ECO:0007669"/>
    <property type="project" value="UniProtKB-SubCell"/>
</dbReference>
<dbReference type="GO" id="GO:0009522">
    <property type="term" value="C:photosystem I"/>
    <property type="evidence" value="ECO:0007669"/>
    <property type="project" value="UniProtKB-KW"/>
</dbReference>
<dbReference type="GO" id="GO:0009523">
    <property type="term" value="C:photosystem II"/>
    <property type="evidence" value="ECO:0007669"/>
    <property type="project" value="UniProtKB-KW"/>
</dbReference>
<dbReference type="GO" id="GO:0016168">
    <property type="term" value="F:chlorophyll binding"/>
    <property type="evidence" value="ECO:0007669"/>
    <property type="project" value="UniProtKB-KW"/>
</dbReference>
<dbReference type="GO" id="GO:0046872">
    <property type="term" value="F:metal ion binding"/>
    <property type="evidence" value="ECO:0007669"/>
    <property type="project" value="UniProtKB-KW"/>
</dbReference>
<dbReference type="GO" id="GO:0009765">
    <property type="term" value="P:photosynthesis, light harvesting"/>
    <property type="evidence" value="ECO:0007669"/>
    <property type="project" value="InterPro"/>
</dbReference>
<dbReference type="FunFam" id="1.10.3460.10:FF:000001">
    <property type="entry name" value="Chlorophyll a-b binding protein, chloroplastic"/>
    <property type="match status" value="1"/>
</dbReference>
<dbReference type="Gene3D" id="1.10.3460.10">
    <property type="entry name" value="Chlorophyll a/b binding protein domain"/>
    <property type="match status" value="1"/>
</dbReference>
<dbReference type="InterPro" id="IPR001344">
    <property type="entry name" value="Chloro_AB-bd_pln"/>
</dbReference>
<dbReference type="InterPro" id="IPR022796">
    <property type="entry name" value="Chloroa_b-bind"/>
</dbReference>
<dbReference type="PANTHER" id="PTHR21649">
    <property type="entry name" value="CHLOROPHYLL A/B BINDING PROTEIN"/>
    <property type="match status" value="1"/>
</dbReference>
<dbReference type="Pfam" id="PF00504">
    <property type="entry name" value="Chloroa_b-bind"/>
    <property type="match status" value="1"/>
</dbReference>
<dbReference type="SUPFAM" id="SSF103511">
    <property type="entry name" value="Chlorophyll a-b binding protein"/>
    <property type="match status" value="1"/>
</dbReference>
<keyword id="KW-0007">Acetylation</keyword>
<keyword id="KW-0148">Chlorophyll</keyword>
<keyword id="KW-0150">Chloroplast</keyword>
<keyword id="KW-0157">Chromophore</keyword>
<keyword id="KW-0460">Magnesium</keyword>
<keyword id="KW-0472">Membrane</keyword>
<keyword id="KW-0479">Metal-binding</keyword>
<keyword id="KW-0597">Phosphoprotein</keyword>
<keyword id="KW-0602">Photosynthesis</keyword>
<keyword id="KW-0603">Photosystem I</keyword>
<keyword id="KW-0604">Photosystem II</keyword>
<keyword id="KW-0934">Plastid</keyword>
<keyword id="KW-1185">Reference proteome</keyword>
<keyword id="KW-0793">Thylakoid</keyword>
<keyword id="KW-0809">Transit peptide</keyword>
<keyword id="KW-0812">Transmembrane</keyword>
<keyword id="KW-1133">Transmembrane helix</keyword>
<evidence type="ECO:0000250" key="1"/>
<evidence type="ECO:0000250" key="2">
    <source>
        <dbReference type="UniProtKB" id="P07371"/>
    </source>
</evidence>
<evidence type="ECO:0000250" key="3">
    <source>
        <dbReference type="UniProtKB" id="P12333"/>
    </source>
</evidence>
<evidence type="ECO:0000255" key="4"/>
<evidence type="ECO:0000305" key="5"/>
<comment type="function">
    <text>The light-harvesting complex (LHC) functions as a light receptor, it captures and delivers excitation energy to photosystems with which it is closely associated.</text>
</comment>
<comment type="cofactor">
    <text evidence="1">Binds at least 14 chlorophylls (8 Chl-a and 6 Chl-b) and carotenoids such as lutein and neoxanthin.</text>
</comment>
<comment type="subunit">
    <text>The LHC complex consists of chlorophyll a-b binding proteins.</text>
</comment>
<comment type="subcellular location">
    <subcellularLocation>
        <location>Plastid</location>
        <location>Chloroplast thylakoid membrane</location>
        <topology>Multi-pass membrane protein</topology>
    </subcellularLocation>
</comment>
<comment type="domain">
    <text>The N-terminus of the protein extends into the stroma where it is involved with adhesion of granal membranes and post-translational modifications; both are believed to mediate the distribution of excitation energy between photosystems I and II.</text>
</comment>
<comment type="PTM">
    <text evidence="1">Photoregulated by reversible phosphorylation of its threonine residues.</text>
</comment>
<comment type="similarity">
    <text evidence="5">Belongs to the light-harvesting chlorophyll a/b-binding (LHC) protein family.</text>
</comment>
<reference key="1">
    <citation type="submission" date="1997-09" db="EMBL/GenBank/DDBJ databases">
        <title>Isolation and characterization of chlorophyll a-b binding protein from rice.</title>
        <authorList>
            <person name="Lee M.C."/>
            <person name="Kim C.S."/>
            <person name="Eun M.Y."/>
        </authorList>
    </citation>
    <scope>NUCLEOTIDE SEQUENCE [MRNA]</scope>
    <source>
        <strain>cv. Milyang 23</strain>
        <tissue>Seed</tissue>
    </source>
</reference>
<reference key="2">
    <citation type="journal article" date="2005" name="PLoS Biol.">
        <title>The genomes of Oryza sativa: a history of duplications.</title>
        <authorList>
            <person name="Yu J."/>
            <person name="Wang J."/>
            <person name="Lin W."/>
            <person name="Li S."/>
            <person name="Li H."/>
            <person name="Zhou J."/>
            <person name="Ni P."/>
            <person name="Dong W."/>
            <person name="Hu S."/>
            <person name="Zeng C."/>
            <person name="Zhang J."/>
            <person name="Zhang Y."/>
            <person name="Li R."/>
            <person name="Xu Z."/>
            <person name="Li S."/>
            <person name="Li X."/>
            <person name="Zheng H."/>
            <person name="Cong L."/>
            <person name="Lin L."/>
            <person name="Yin J."/>
            <person name="Geng J."/>
            <person name="Li G."/>
            <person name="Shi J."/>
            <person name="Liu J."/>
            <person name="Lv H."/>
            <person name="Li J."/>
            <person name="Wang J."/>
            <person name="Deng Y."/>
            <person name="Ran L."/>
            <person name="Shi X."/>
            <person name="Wang X."/>
            <person name="Wu Q."/>
            <person name="Li C."/>
            <person name="Ren X."/>
            <person name="Wang J."/>
            <person name="Wang X."/>
            <person name="Li D."/>
            <person name="Liu D."/>
            <person name="Zhang X."/>
            <person name="Ji Z."/>
            <person name="Zhao W."/>
            <person name="Sun Y."/>
            <person name="Zhang Z."/>
            <person name="Bao J."/>
            <person name="Han Y."/>
            <person name="Dong L."/>
            <person name="Ji J."/>
            <person name="Chen P."/>
            <person name="Wu S."/>
            <person name="Liu J."/>
            <person name="Xiao Y."/>
            <person name="Bu D."/>
            <person name="Tan J."/>
            <person name="Yang L."/>
            <person name="Ye C."/>
            <person name="Zhang J."/>
            <person name="Xu J."/>
            <person name="Zhou Y."/>
            <person name="Yu Y."/>
            <person name="Zhang B."/>
            <person name="Zhuang S."/>
            <person name="Wei H."/>
            <person name="Liu B."/>
            <person name="Lei M."/>
            <person name="Yu H."/>
            <person name="Li Y."/>
            <person name="Xu H."/>
            <person name="Wei S."/>
            <person name="He X."/>
            <person name="Fang L."/>
            <person name="Zhang Z."/>
            <person name="Zhang Y."/>
            <person name="Huang X."/>
            <person name="Su Z."/>
            <person name="Tong W."/>
            <person name="Li J."/>
            <person name="Tong Z."/>
            <person name="Li S."/>
            <person name="Ye J."/>
            <person name="Wang L."/>
            <person name="Fang L."/>
            <person name="Lei T."/>
            <person name="Chen C.-S."/>
            <person name="Chen H.-C."/>
            <person name="Xu Z."/>
            <person name="Li H."/>
            <person name="Huang H."/>
            <person name="Zhang F."/>
            <person name="Xu H."/>
            <person name="Li N."/>
            <person name="Zhao C."/>
            <person name="Li S."/>
            <person name="Dong L."/>
            <person name="Huang Y."/>
            <person name="Li L."/>
            <person name="Xi Y."/>
            <person name="Qi Q."/>
            <person name="Li W."/>
            <person name="Zhang B."/>
            <person name="Hu W."/>
            <person name="Zhang Y."/>
            <person name="Tian X."/>
            <person name="Jiao Y."/>
            <person name="Liang X."/>
            <person name="Jin J."/>
            <person name="Gao L."/>
            <person name="Zheng W."/>
            <person name="Hao B."/>
            <person name="Liu S.-M."/>
            <person name="Wang W."/>
            <person name="Yuan L."/>
            <person name="Cao M."/>
            <person name="McDermott J."/>
            <person name="Samudrala R."/>
            <person name="Wang J."/>
            <person name="Wong G.K.-S."/>
            <person name="Yang H."/>
        </authorList>
    </citation>
    <scope>NUCLEOTIDE SEQUENCE [LARGE SCALE GENOMIC DNA]</scope>
    <source>
        <strain>cv. 93-11</strain>
    </source>
</reference>
<protein>
    <recommendedName>
        <fullName>Chlorophyll a-b binding protein, chloroplastic</fullName>
    </recommendedName>
    <alternativeName>
        <fullName>LHCII type I CAB</fullName>
        <shortName>LHCP</shortName>
    </alternativeName>
</protein>
<gene>
    <name type="ORF">OsI_012078</name>
</gene>
<accession>A2XJ35</accession>
<accession>O22543</accession>
<accession>O65326</accession>
<accession>P27519</accession>
<accession>Q6ATT3</accession>
<sequence>MAASALHQTTSFLGTAPRRDELVRRVGDSGGRITMRRTVKSAPQSIWYGPDRPKYLGPFSEQTPSYLTGEFPGDYGWDTAGLSADPETFARNRELEVIHSRWAMLGALGCVFPEILSKNGVKFGEAVWFKAGAQIFSEGGLDYLGNPNLVHAQSILAIWAVQVVLMGFVEGYRVGGGPLGEGLDKVYPGGAFDPLGLADDPDTFAELKVKELKNGRLAMFSMFGFFVQAIVTGKGPIENLFDHVADPVANNAWAYATNFVPGK</sequence>
<proteinExistence type="evidence at transcript level"/>